<feature type="chain" id="PRO_0000324456" description="Stress response protein NST1">
    <location>
        <begin position="1"/>
        <end position="1202"/>
    </location>
</feature>
<feature type="region of interest" description="Disordered" evidence="3">
    <location>
        <begin position="28"/>
        <end position="217"/>
    </location>
</feature>
<feature type="region of interest" description="Disordered" evidence="3">
    <location>
        <begin position="236"/>
        <end position="291"/>
    </location>
</feature>
<feature type="region of interest" description="Disordered" evidence="3">
    <location>
        <begin position="390"/>
        <end position="423"/>
    </location>
</feature>
<feature type="region of interest" description="Disordered" evidence="3">
    <location>
        <begin position="487"/>
        <end position="543"/>
    </location>
</feature>
<feature type="region of interest" description="Disordered" evidence="3">
    <location>
        <begin position="579"/>
        <end position="852"/>
    </location>
</feature>
<feature type="region of interest" description="Disordered" evidence="3">
    <location>
        <begin position="904"/>
        <end position="967"/>
    </location>
</feature>
<feature type="region of interest" description="Disordered" evidence="3">
    <location>
        <begin position="979"/>
        <end position="1015"/>
    </location>
</feature>
<feature type="coiled-coil region" evidence="2">
    <location>
        <begin position="557"/>
        <end position="704"/>
    </location>
</feature>
<feature type="compositionally biased region" description="Basic and acidic residues" evidence="3">
    <location>
        <begin position="158"/>
        <end position="167"/>
    </location>
</feature>
<feature type="compositionally biased region" description="Polar residues" evidence="3">
    <location>
        <begin position="178"/>
        <end position="187"/>
    </location>
</feature>
<feature type="compositionally biased region" description="Acidic residues" evidence="3">
    <location>
        <begin position="204"/>
        <end position="217"/>
    </location>
</feature>
<feature type="compositionally biased region" description="Basic residues" evidence="3">
    <location>
        <begin position="252"/>
        <end position="261"/>
    </location>
</feature>
<feature type="compositionally biased region" description="Acidic residues" evidence="3">
    <location>
        <begin position="408"/>
        <end position="423"/>
    </location>
</feature>
<feature type="compositionally biased region" description="Acidic residues" evidence="3">
    <location>
        <begin position="504"/>
        <end position="536"/>
    </location>
</feature>
<feature type="compositionally biased region" description="Basic and acidic residues" evidence="3">
    <location>
        <begin position="579"/>
        <end position="710"/>
    </location>
</feature>
<feature type="compositionally biased region" description="Polar residues" evidence="3">
    <location>
        <begin position="754"/>
        <end position="789"/>
    </location>
</feature>
<feature type="compositionally biased region" description="Pro residues" evidence="3">
    <location>
        <begin position="816"/>
        <end position="828"/>
    </location>
</feature>
<feature type="compositionally biased region" description="Low complexity" evidence="3">
    <location>
        <begin position="830"/>
        <end position="848"/>
    </location>
</feature>
<feature type="compositionally biased region" description="Polar residues" evidence="3">
    <location>
        <begin position="916"/>
        <end position="926"/>
    </location>
</feature>
<feature type="compositionally biased region" description="Basic and acidic residues" evidence="3">
    <location>
        <begin position="954"/>
        <end position="967"/>
    </location>
</feature>
<reference key="1">
    <citation type="journal article" date="2007" name="Plant Cell">
        <title>Dothideomycete-plant interactions illuminated by genome sequencing and EST analysis of the wheat pathogen Stagonospora nodorum.</title>
        <authorList>
            <person name="Hane J.K."/>
            <person name="Lowe R.G.T."/>
            <person name="Solomon P.S."/>
            <person name="Tan K.-C."/>
            <person name="Schoch C.L."/>
            <person name="Spatafora J.W."/>
            <person name="Crous P.W."/>
            <person name="Kodira C.D."/>
            <person name="Birren B.W."/>
            <person name="Galagan J.E."/>
            <person name="Torriani S.F.F."/>
            <person name="McDonald B.A."/>
            <person name="Oliver R.P."/>
        </authorList>
    </citation>
    <scope>NUCLEOTIDE SEQUENCE [LARGE SCALE GENOMIC DNA]</scope>
    <source>
        <strain>SN15 / ATCC MYA-4574 / FGSC 10173</strain>
    </source>
</reference>
<protein>
    <recommendedName>
        <fullName>Stress response protein NST1</fullName>
    </recommendedName>
</protein>
<sequence>MDWTGARARTSWGKRPQTAALGLAATFRHLNTDDHRPIEQTTQTPYSLHRPLPPPSGEPATDTPTHSSCPAPPIAVPSSLLLPRTTHPSSRSSHICACHTPVTARHSPNRLCPVSLPTPTPRSMAQGTKAPAAAMPPNSSVLNMPALNAVNRKKQKRREKEAAKKAAQDPSPPATLRNGVSSGSTHLPANAAHTRQPAPHYDDPELDDPQYDDEDDADFYSDEEAEHYEHAYGTNGHYQQGYAHAPIPSSSKKPRKKKKGAAAHPPHAYTQHVAPRHSPAPNHSMVTSGSKSIWNTSTVEERERIREFWLSLGEDERKSLVKIEKEAVLRKMKEQQKHSCSCSVCGRKRTAIEEELEVLYDAYYEELEQYAHLQQDVGRFLPDANFGHVRSAPHPRPLMTTHPPPGPYDDEEEDEYSGEDDEEDIFKYLPPPDAADFLRFGSSLTVKGGILTVADDLLKNDGKKFIEMMEQLAERRMQREEEANFHAHPSMHRYNSAHNHAPQPEEEEYDDEVDEEEGFEDEDYEEDDEDEDEAMTEEQRMEEGRRMFQIFAARMFEQRVLQAYREKVAAERQKRLLEELEEENEKKDQKEAKKAKEAQKRKEKKEKQRQIKAEEKAKKDAELAAKEAELKAAEEKRLEEQRKKREEQRKKKEAERKAQEEEKQRKEAERQKRLQEERDRQQELERKAREQKALEKKVKDDAKRKERDRAGSQGEGGSGRRRPTTTASARSVKVCRSPHGILSSFVPKAPTPSRPRQTSRQGSHGSSPKTPQVAPGTSKSMSPTSQAQGNMMPKSILTKPANSQHAGHHPLGQPSSPMPPIGPPPGLSGPPGLSMGLPPGLNGFPGPGSMLPNMMSPRPGMPFFPQPPVPQAFRGFPPPGMAGPRGFPMDGPPGLGPMPGFAGPNQAPPFGMGPPTQHSRQGSGSFASMDVPISAPSVQPIHRPAPIQRPSSVKPHDSNKHGQDSDVDELADHLGSKALLDEEDVPEIPDRRSSVQQHGSMRSMPIGFGFPDAPNSHQSTAFNGFGSANTASIWGTPPSQAFSSAAGPWGNSPTSGFFTNPLTMSSPRVSDHRAPNEPRLVWLRRVICTVCKMLSSRHAGPDGFIDANEVQQQLDAFRDPREPVVTQEELKEACDIIDGTHNNGGGSLEYKNLGDGRLSHIKFVDTTGPPPALGEIGSPIPSHSLPVAGFGGRFPGLGPQGF</sequence>
<evidence type="ECO:0000250" key="1"/>
<evidence type="ECO:0000255" key="2"/>
<evidence type="ECO:0000256" key="3">
    <source>
        <dbReference type="SAM" id="MobiDB-lite"/>
    </source>
</evidence>
<evidence type="ECO:0000305" key="4"/>
<dbReference type="EMBL" id="CH445336">
    <property type="protein sequence ID" value="EAT84343.2"/>
    <property type="status" value="ALT_SEQ"/>
    <property type="molecule type" value="Genomic_DNA"/>
</dbReference>
<dbReference type="RefSeq" id="XP_001798393.1">
    <property type="nucleotide sequence ID" value="XM_001798341.1"/>
</dbReference>
<dbReference type="SMR" id="Q0UJJ7"/>
<dbReference type="GeneID" id="5975291"/>
<dbReference type="KEGG" id="pno:SNOG_08067"/>
<dbReference type="VEuPathDB" id="FungiDB:JI435_080670"/>
<dbReference type="InParanoid" id="Q0UJJ7"/>
<dbReference type="OMA" id="EEDTQYG"/>
<dbReference type="Proteomes" id="UP000001055">
    <property type="component" value="Unassembled WGS sequence"/>
</dbReference>
<dbReference type="GO" id="GO:0005737">
    <property type="term" value="C:cytoplasm"/>
    <property type="evidence" value="ECO:0007669"/>
    <property type="project" value="UniProtKB-SubCell"/>
</dbReference>
<dbReference type="CDD" id="cd22265">
    <property type="entry name" value="UDM1_RNF168"/>
    <property type="match status" value="1"/>
</dbReference>
<dbReference type="InterPro" id="IPR051195">
    <property type="entry name" value="Fungal_stress_NST1"/>
</dbReference>
<dbReference type="InterPro" id="IPR025279">
    <property type="entry name" value="NST1"/>
</dbReference>
<dbReference type="PANTHER" id="PTHR31780:SF10">
    <property type="entry name" value="LD36051P"/>
    <property type="match status" value="1"/>
</dbReference>
<dbReference type="PANTHER" id="PTHR31780">
    <property type="entry name" value="STRESS RESPONSE PROTEIN NST1-RELATED"/>
    <property type="match status" value="1"/>
</dbReference>
<dbReference type="Pfam" id="PF13945">
    <property type="entry name" value="NST1"/>
    <property type="match status" value="1"/>
</dbReference>
<gene>
    <name type="primary">NST1</name>
    <name type="ORF">SNOG_08067</name>
</gene>
<keyword id="KW-0175">Coiled coil</keyword>
<keyword id="KW-0963">Cytoplasm</keyword>
<keyword id="KW-0346">Stress response</keyword>
<name>NST1_PHANO</name>
<accession>Q0UJJ7</accession>
<organism>
    <name type="scientific">Phaeosphaeria nodorum (strain SN15 / ATCC MYA-4574 / FGSC 10173)</name>
    <name type="common">Glume blotch fungus</name>
    <name type="synonym">Parastagonospora nodorum</name>
    <dbReference type="NCBI Taxonomy" id="321614"/>
    <lineage>
        <taxon>Eukaryota</taxon>
        <taxon>Fungi</taxon>
        <taxon>Dikarya</taxon>
        <taxon>Ascomycota</taxon>
        <taxon>Pezizomycotina</taxon>
        <taxon>Dothideomycetes</taxon>
        <taxon>Pleosporomycetidae</taxon>
        <taxon>Pleosporales</taxon>
        <taxon>Pleosporineae</taxon>
        <taxon>Phaeosphaeriaceae</taxon>
        <taxon>Parastagonospora</taxon>
    </lineage>
</organism>
<proteinExistence type="inferred from homology"/>
<comment type="function">
    <text evidence="1">May act as a negative regulator of salt tolerance.</text>
</comment>
<comment type="subcellular location">
    <subcellularLocation>
        <location evidence="1">Cytoplasm</location>
    </subcellularLocation>
</comment>
<comment type="similarity">
    <text evidence="4">Belongs to the NST1 family.</text>
</comment>
<comment type="sequence caution" evidence="4">
    <conflict type="erroneous gene model prediction">
        <sequence resource="EMBL-CDS" id="EAT84343"/>
    </conflict>
</comment>